<reference key="1">
    <citation type="journal article" date="1997" name="Proc. Natl. Acad. Sci. U.S.A.">
        <title>Group I allergens of grass pollen as cell wall-loosening agents.</title>
        <authorList>
            <person name="Cosgrove D.J."/>
            <person name="Bedinger P.A."/>
            <person name="Durachko D.M."/>
        </authorList>
    </citation>
    <scope>NUCLEOTIDE SEQUENCE [MRNA]</scope>
</reference>
<reference key="2">
    <citation type="journal article" date="2003" name="Science">
        <title>In-depth view of structure, activity, and evolution of rice chromosome 10.</title>
        <authorList>
            <person name="Yu Y."/>
            <person name="Rambo T."/>
            <person name="Currie J."/>
            <person name="Saski C."/>
            <person name="Kim H.-R."/>
            <person name="Collura K."/>
            <person name="Thompson S."/>
            <person name="Simmons J."/>
            <person name="Yang T.-J."/>
            <person name="Nah G."/>
            <person name="Patel A.J."/>
            <person name="Thurmond S."/>
            <person name="Henry D."/>
            <person name="Oates R."/>
            <person name="Palmer M."/>
            <person name="Pries G."/>
            <person name="Gibson J."/>
            <person name="Anderson H."/>
            <person name="Paradkar M."/>
            <person name="Crane L."/>
            <person name="Dale J."/>
            <person name="Carver M.B."/>
            <person name="Wood T."/>
            <person name="Frisch D."/>
            <person name="Engler F."/>
            <person name="Soderlund C."/>
            <person name="Palmer L.E."/>
            <person name="Teytelman L."/>
            <person name="Nascimento L."/>
            <person name="De la Bastide M."/>
            <person name="Spiegel L."/>
            <person name="Ware D."/>
            <person name="O'Shaughnessy A."/>
            <person name="Dike S."/>
            <person name="Dedhia N."/>
            <person name="Preston R."/>
            <person name="Huang E."/>
            <person name="Ferraro K."/>
            <person name="Kuit K."/>
            <person name="Miller B."/>
            <person name="Zutavern T."/>
            <person name="Katzenberger F."/>
            <person name="Muller S."/>
            <person name="Balija V."/>
            <person name="Martienssen R.A."/>
            <person name="Stein L."/>
            <person name="Minx P."/>
            <person name="Johnson D."/>
            <person name="Cordum H."/>
            <person name="Mardis E."/>
            <person name="Cheng Z."/>
            <person name="Jiang J."/>
            <person name="Wilson R."/>
            <person name="McCombie W.R."/>
            <person name="Wing R.A."/>
            <person name="Yuan Q."/>
            <person name="Ouyang S."/>
            <person name="Liu J."/>
            <person name="Jones K.M."/>
            <person name="Gansberger K."/>
            <person name="Moffat K."/>
            <person name="Hill J."/>
            <person name="Tsitrin T."/>
            <person name="Overton L."/>
            <person name="Bera J."/>
            <person name="Kim M."/>
            <person name="Jin S."/>
            <person name="Tallon L."/>
            <person name="Ciecko A."/>
            <person name="Pai G."/>
            <person name="Van Aken S."/>
            <person name="Utterback T."/>
            <person name="Reidmuller S."/>
            <person name="Bormann J."/>
            <person name="Feldblyum T."/>
            <person name="Hsiao J."/>
            <person name="Zismann V."/>
            <person name="Blunt S."/>
            <person name="de Vazeille A.R."/>
            <person name="Shaffer T."/>
            <person name="Koo H."/>
            <person name="Suh B."/>
            <person name="Yang Q."/>
            <person name="Haas B."/>
            <person name="Peterson J."/>
            <person name="Pertea M."/>
            <person name="Volfovsky N."/>
            <person name="Wortman J."/>
            <person name="White O."/>
            <person name="Salzberg S.L."/>
            <person name="Fraser C.M."/>
            <person name="Buell C.R."/>
            <person name="Messing J."/>
            <person name="Song R."/>
            <person name="Fuks G."/>
            <person name="Llaca V."/>
            <person name="Kovchak S."/>
            <person name="Young S."/>
            <person name="Bowers J.E."/>
            <person name="Paterson A.H."/>
            <person name="Johns M.A."/>
            <person name="Mao L."/>
            <person name="Pan H."/>
            <person name="Dean R.A."/>
        </authorList>
    </citation>
    <scope>NUCLEOTIDE SEQUENCE [LARGE SCALE GENOMIC DNA]</scope>
    <source>
        <strain>cv. Nipponbare</strain>
    </source>
</reference>
<reference key="3">
    <citation type="journal article" date="2005" name="Nature">
        <title>The map-based sequence of the rice genome.</title>
        <authorList>
            <consortium name="International rice genome sequencing project (IRGSP)"/>
        </authorList>
    </citation>
    <scope>NUCLEOTIDE SEQUENCE [LARGE SCALE GENOMIC DNA]</scope>
    <source>
        <strain>cv. Nipponbare</strain>
    </source>
</reference>
<reference key="4">
    <citation type="journal article" date="2008" name="Nucleic Acids Res.">
        <title>The rice annotation project database (RAP-DB): 2008 update.</title>
        <authorList>
            <consortium name="The rice annotation project (RAP)"/>
        </authorList>
    </citation>
    <scope>GENOME REANNOTATION</scope>
    <source>
        <strain>cv. Nipponbare</strain>
    </source>
</reference>
<reference key="5">
    <citation type="journal article" date="2013" name="Rice">
        <title>Improvement of the Oryza sativa Nipponbare reference genome using next generation sequence and optical map data.</title>
        <authorList>
            <person name="Kawahara Y."/>
            <person name="de la Bastide M."/>
            <person name="Hamilton J.P."/>
            <person name="Kanamori H."/>
            <person name="McCombie W.R."/>
            <person name="Ouyang S."/>
            <person name="Schwartz D.C."/>
            <person name="Tanaka T."/>
            <person name="Wu J."/>
            <person name="Zhou S."/>
            <person name="Childs K.L."/>
            <person name="Davidson R.M."/>
            <person name="Lin H."/>
            <person name="Quesada-Ocampo L."/>
            <person name="Vaillancourt B."/>
            <person name="Sakai H."/>
            <person name="Lee S.S."/>
            <person name="Kim J."/>
            <person name="Numa H."/>
            <person name="Itoh T."/>
            <person name="Buell C.R."/>
            <person name="Matsumoto T."/>
        </authorList>
    </citation>
    <scope>GENOME REANNOTATION</scope>
    <source>
        <strain>cv. Nipponbare</strain>
    </source>
</reference>
<reference key="6">
    <citation type="journal article" date="2001" name="Plant Physiol.">
        <title>Expression of beta-expansins is correlated with internodal elongation in deepwater rice.</title>
        <authorList>
            <person name="Lee Y."/>
            <person name="Kende H."/>
        </authorList>
    </citation>
    <scope>TISSUE SPECIFICITY</scope>
    <scope>INDUCTION</scope>
</reference>
<reference key="7">
    <citation type="journal article" date="2002" name="Plant Physiol.">
        <title>Expression of alpha-expansin and expansin-like genes in deepwater rice.</title>
        <authorList>
            <person name="Lee Y."/>
            <person name="Kende H."/>
        </authorList>
    </citation>
    <scope>DEVELOPMENTAL STAGE</scope>
</reference>
<reference key="8">
    <citation type="journal article" date="2004" name="Plant Mol. Biol.">
        <title>Nomenclature for members of the expansin superfamily of genes and proteins.</title>
        <authorList>
            <person name="Kende H."/>
            <person name="Bradford K.J."/>
            <person name="Brummell D.A."/>
            <person name="Cho H.-T."/>
            <person name="Cosgrove D.J."/>
            <person name="Fleming A.J."/>
            <person name="Gehring C."/>
            <person name="Lee Y."/>
            <person name="McQueen-Mason S.J."/>
            <person name="Rose J.K.C."/>
            <person name="Voesenek L.A.C."/>
        </authorList>
    </citation>
    <scope>NOMENCLATURE</scope>
</reference>
<reference key="9">
    <citation type="journal article" date="2005" name="Mol. Cells">
        <title>Biochemical properties and localization of the beta-expansin OsEXPB3 in rice (Oryza sativa L.).</title>
        <authorList>
            <person name="Lee Y."/>
            <person name="Choi D."/>
        </authorList>
    </citation>
    <scope>SUBCELLULAR LOCATION</scope>
    <scope>TISSUE SPECIFICITY</scope>
</reference>
<name>EXPB3_ORYSJ</name>
<keyword id="KW-0134">Cell wall</keyword>
<keyword id="KW-0961">Cell wall biogenesis/degradation</keyword>
<keyword id="KW-1015">Disulfide bond</keyword>
<keyword id="KW-0325">Glycoprotein</keyword>
<keyword id="KW-0472">Membrane</keyword>
<keyword id="KW-1185">Reference proteome</keyword>
<keyword id="KW-0964">Secreted</keyword>
<keyword id="KW-0732">Signal</keyword>
<accession>Q336T5</accession>
<accession>Q9LD11</accession>
<gene>
    <name type="primary">EXPB3</name>
    <name type="ordered locus">Os10g0555900</name>
    <name type="ordered locus">LOC_Os10g40720</name>
    <name type="ORF">OSJNBa0010C11.1</name>
    <name type="ORF">OSJNBb0014I11.1</name>
</gene>
<evidence type="ECO:0000250" key="1"/>
<evidence type="ECO:0000255" key="2"/>
<evidence type="ECO:0000255" key="3">
    <source>
        <dbReference type="PROSITE-ProRule" id="PRU00078"/>
    </source>
</evidence>
<evidence type="ECO:0000255" key="4">
    <source>
        <dbReference type="PROSITE-ProRule" id="PRU00079"/>
    </source>
</evidence>
<evidence type="ECO:0000269" key="5">
    <source>
    </source>
</evidence>
<evidence type="ECO:0000269" key="6">
    <source>
    </source>
</evidence>
<evidence type="ECO:0000269" key="7">
    <source>
    </source>
</evidence>
<evidence type="ECO:0000305" key="8"/>
<protein>
    <recommendedName>
        <fullName>Expansin-B3</fullName>
    </recommendedName>
    <alternativeName>
        <fullName>Beta-expansin-3</fullName>
    </alternativeName>
    <alternativeName>
        <fullName>OsEXPB3</fullName>
    </alternativeName>
    <alternativeName>
        <fullName>OsaEXPb1.10</fullName>
    </alternativeName>
</protein>
<comment type="function">
    <text evidence="1">May cause loosening and extension of plant cell walls by disrupting non-covalent bonding between cellulose microfibrils and matrix glucans. No enzymatic activity has been found. May be required for rapid internodal elongation in deepwater rice during submergence (By similarity).</text>
</comment>
<comment type="subcellular location">
    <subcellularLocation>
        <location evidence="7">Secreted</location>
        <location evidence="7">Cell wall</location>
    </subcellularLocation>
    <subcellularLocation>
        <location evidence="7">Membrane</location>
        <topology evidence="7">Peripheral membrane protein</topology>
    </subcellularLocation>
</comment>
<comment type="tissue specificity">
    <text evidence="5 7">Expressed in roots, coleoptiles and internodes.</text>
</comment>
<comment type="developmental stage">
    <text evidence="6">Expressed in the growing regions of roots, coleoptiles, and internodes.</text>
</comment>
<comment type="induction">
    <text evidence="5">By gibberellin (GA3) and wounding.</text>
</comment>
<comment type="similarity">
    <text evidence="8">Belongs to the expansin family. Expansin B subfamily.</text>
</comment>
<comment type="online information" name="EXPANSIN homepage">
    <link uri="https://www.dept.psu.edu/biology/groups/expansins/index.htm"/>
</comment>
<proteinExistence type="evidence at transcript level"/>
<sequence>MAFSISKKAAVAALFSFLVVTCVAGARPGNFSASDFTADPNWEVARATWYGAPTGAGPDDDGGACGFKNTNQYPFSSMTSCGNEPIFKDGKGCGSCYQIRCVNHPACSGNPETVIITDMNYYPVSKYHFDLSGTAFGAMAKPGQNDQLRHAGIIDIQFKRVPCNFPGLKVTFHVEEGSNPVYFAVLVEYEDGDGDVVQVDLMEANSQSWTPMRESWGSIWRLDSNHRLTAPFSLRITNESGKQLVASQVIPANWAPMAVYRSFVQYSS</sequence>
<dbReference type="EMBL" id="AF261271">
    <property type="protein sequence ID" value="AAF72984.1"/>
    <property type="molecule type" value="mRNA"/>
</dbReference>
<dbReference type="EMBL" id="AC037426">
    <property type="protein sequence ID" value="AAK15453.1"/>
    <property type="molecule type" value="Genomic_DNA"/>
</dbReference>
<dbReference type="EMBL" id="AC069300">
    <property type="protein sequence ID" value="AAK55465.1"/>
    <property type="molecule type" value="Genomic_DNA"/>
</dbReference>
<dbReference type="EMBL" id="DP000086">
    <property type="protein sequence ID" value="ABB47975.2"/>
    <property type="molecule type" value="Genomic_DNA"/>
</dbReference>
<dbReference type="EMBL" id="AP008216">
    <property type="protein sequence ID" value="BAF27188.1"/>
    <property type="molecule type" value="Genomic_DNA"/>
</dbReference>
<dbReference type="EMBL" id="AP014966">
    <property type="protein sequence ID" value="BAT11995.1"/>
    <property type="molecule type" value="Genomic_DNA"/>
</dbReference>
<dbReference type="RefSeq" id="XP_015612911.1">
    <property type="nucleotide sequence ID" value="XM_015757425.1"/>
</dbReference>
<dbReference type="SMR" id="Q336T5"/>
<dbReference type="FunCoup" id="Q336T5">
    <property type="interactions" value="11"/>
</dbReference>
<dbReference type="STRING" id="39947.Q336T5"/>
<dbReference type="GlyCosmos" id="Q336T5">
    <property type="glycosylation" value="2 sites, No reported glycans"/>
</dbReference>
<dbReference type="PaxDb" id="39947-Q336T5"/>
<dbReference type="EnsemblPlants" id="Os10t0555900-02">
    <property type="protein sequence ID" value="Os10t0555900-02"/>
    <property type="gene ID" value="Os10g0555900"/>
</dbReference>
<dbReference type="Gramene" id="Os10t0555900-02">
    <property type="protein sequence ID" value="Os10t0555900-02"/>
    <property type="gene ID" value="Os10g0555900"/>
</dbReference>
<dbReference type="KEGG" id="dosa:Os10g0555900"/>
<dbReference type="eggNOG" id="ENOG502QRTE">
    <property type="taxonomic scope" value="Eukaryota"/>
</dbReference>
<dbReference type="HOGENOM" id="CLU_027462_1_0_1"/>
<dbReference type="InParanoid" id="Q336T5"/>
<dbReference type="OMA" id="QIRCIND"/>
<dbReference type="OrthoDB" id="613806at2759"/>
<dbReference type="Proteomes" id="UP000000763">
    <property type="component" value="Chromosome 10"/>
</dbReference>
<dbReference type="Proteomes" id="UP000059680">
    <property type="component" value="Chromosome 10"/>
</dbReference>
<dbReference type="ExpressionAtlas" id="Q336T5">
    <property type="expression patterns" value="baseline and differential"/>
</dbReference>
<dbReference type="GO" id="GO:0005576">
    <property type="term" value="C:extracellular region"/>
    <property type="evidence" value="ECO:0007669"/>
    <property type="project" value="UniProtKB-KW"/>
</dbReference>
<dbReference type="GO" id="GO:0016020">
    <property type="term" value="C:membrane"/>
    <property type="evidence" value="ECO:0007669"/>
    <property type="project" value="UniProtKB-SubCell"/>
</dbReference>
<dbReference type="GO" id="GO:0009828">
    <property type="term" value="P:plant-type cell wall loosening"/>
    <property type="evidence" value="ECO:0000250"/>
    <property type="project" value="UniProtKB"/>
</dbReference>
<dbReference type="GO" id="GO:0019953">
    <property type="term" value="P:sexual reproduction"/>
    <property type="evidence" value="ECO:0007669"/>
    <property type="project" value="InterPro"/>
</dbReference>
<dbReference type="CDD" id="cd22275">
    <property type="entry name" value="DPBB_EXPB_N"/>
    <property type="match status" value="1"/>
</dbReference>
<dbReference type="Gene3D" id="2.60.40.760">
    <property type="entry name" value="Expansin, cellulose-binding-like domain"/>
    <property type="match status" value="1"/>
</dbReference>
<dbReference type="Gene3D" id="2.40.40.10">
    <property type="entry name" value="RlpA-like domain"/>
    <property type="match status" value="1"/>
</dbReference>
<dbReference type="InterPro" id="IPR007118">
    <property type="entry name" value="Expan_Lol_pI"/>
</dbReference>
<dbReference type="InterPro" id="IPR007112">
    <property type="entry name" value="Expansin/allergen_DPBB_dom"/>
</dbReference>
<dbReference type="InterPro" id="IPR007117">
    <property type="entry name" value="Expansin_CBD"/>
</dbReference>
<dbReference type="InterPro" id="IPR036749">
    <property type="entry name" value="Expansin_CBD_sf"/>
</dbReference>
<dbReference type="InterPro" id="IPR005795">
    <property type="entry name" value="LolPI"/>
</dbReference>
<dbReference type="InterPro" id="IPR009009">
    <property type="entry name" value="RlpA-like_DPBB"/>
</dbReference>
<dbReference type="InterPro" id="IPR036908">
    <property type="entry name" value="RlpA-like_sf"/>
</dbReference>
<dbReference type="PANTHER" id="PTHR31692">
    <property type="entry name" value="EXPANSIN-B3"/>
    <property type="match status" value="1"/>
</dbReference>
<dbReference type="PANTHER" id="PTHR31692:SF17">
    <property type="entry name" value="EXPANSIN-B3"/>
    <property type="match status" value="1"/>
</dbReference>
<dbReference type="Pfam" id="PF03330">
    <property type="entry name" value="DPBB_1"/>
    <property type="match status" value="1"/>
</dbReference>
<dbReference type="Pfam" id="PF01357">
    <property type="entry name" value="Expansin_C"/>
    <property type="match status" value="1"/>
</dbReference>
<dbReference type="PRINTS" id="PR01225">
    <property type="entry name" value="EXPANSNFAMLY"/>
</dbReference>
<dbReference type="PRINTS" id="PR00829">
    <property type="entry name" value="LOLP1ALLERGN"/>
</dbReference>
<dbReference type="SMART" id="SM00837">
    <property type="entry name" value="DPBB_1"/>
    <property type="match status" value="1"/>
</dbReference>
<dbReference type="SUPFAM" id="SSF50685">
    <property type="entry name" value="Barwin-like endoglucanases"/>
    <property type="match status" value="1"/>
</dbReference>
<dbReference type="SUPFAM" id="SSF49590">
    <property type="entry name" value="PHL pollen allergen"/>
    <property type="match status" value="1"/>
</dbReference>
<dbReference type="PROSITE" id="PS50843">
    <property type="entry name" value="EXPANSIN_CBD"/>
    <property type="match status" value="1"/>
</dbReference>
<dbReference type="PROSITE" id="PS50842">
    <property type="entry name" value="EXPANSIN_EG45"/>
    <property type="match status" value="1"/>
</dbReference>
<organism>
    <name type="scientific">Oryza sativa subsp. japonica</name>
    <name type="common">Rice</name>
    <dbReference type="NCBI Taxonomy" id="39947"/>
    <lineage>
        <taxon>Eukaryota</taxon>
        <taxon>Viridiplantae</taxon>
        <taxon>Streptophyta</taxon>
        <taxon>Embryophyta</taxon>
        <taxon>Tracheophyta</taxon>
        <taxon>Spermatophyta</taxon>
        <taxon>Magnoliopsida</taxon>
        <taxon>Liliopsida</taxon>
        <taxon>Poales</taxon>
        <taxon>Poaceae</taxon>
        <taxon>BOP clade</taxon>
        <taxon>Oryzoideae</taxon>
        <taxon>Oryzeae</taxon>
        <taxon>Oryzinae</taxon>
        <taxon>Oryza</taxon>
        <taxon>Oryza sativa</taxon>
    </lineage>
</organism>
<feature type="signal peptide" evidence="2">
    <location>
        <begin position="1"/>
        <end position="25"/>
    </location>
</feature>
<feature type="chain" id="PRO_0000252014" description="Expansin-B3">
    <location>
        <begin position="26"/>
        <end position="268"/>
    </location>
</feature>
<feature type="domain" description="Expansin-like EG45" evidence="4">
    <location>
        <begin position="62"/>
        <end position="168"/>
    </location>
</feature>
<feature type="domain" description="Expansin-like CBD" evidence="3">
    <location>
        <begin position="181"/>
        <end position="262"/>
    </location>
</feature>
<feature type="glycosylation site" description="N-linked (GlcNAc...) asparagine" evidence="2">
    <location>
        <position position="30"/>
    </location>
</feature>
<feature type="glycosylation site" description="N-linked (GlcNAc...) asparagine" evidence="2">
    <location>
        <position position="238"/>
    </location>
</feature>
<feature type="disulfide bond" evidence="4">
    <location>
        <begin position="65"/>
        <end position="93"/>
    </location>
</feature>
<feature type="disulfide bond" evidence="4">
    <location>
        <begin position="96"/>
        <end position="163"/>
    </location>
</feature>
<feature type="disulfide bond" evidence="4">
    <location>
        <begin position="101"/>
        <end position="107"/>
    </location>
</feature>